<accession>P0AAD6</accession>
<accession>P36559</accession>
<accession>Q2MA38</accession>
<name>SDAC_ECOLI</name>
<organism>
    <name type="scientific">Escherichia coli (strain K12)</name>
    <dbReference type="NCBI Taxonomy" id="83333"/>
    <lineage>
        <taxon>Bacteria</taxon>
        <taxon>Pseudomonadati</taxon>
        <taxon>Pseudomonadota</taxon>
        <taxon>Gammaproteobacteria</taxon>
        <taxon>Enterobacterales</taxon>
        <taxon>Enterobacteriaceae</taxon>
        <taxon>Escherichia</taxon>
    </lineage>
</organism>
<protein>
    <recommendedName>
        <fullName evidence="11">Serine transporter SdaC</fullName>
    </recommendedName>
    <alternativeName>
        <fullName evidence="14">H(+)/L-serine symporter</fullName>
    </alternativeName>
    <alternativeName>
        <fullName evidence="10">L-serine transport system</fullName>
    </alternativeName>
</protein>
<sequence length="429" mass="46906">METTQTSTIASKDSRSAWRKTDTMWMLGLYGTAIGAGVLFLPINAGVGGMIPLIIMAILAFPMTFFAHRGLTRFVLSGKNPGEDITEVVEEHFGIGAGKLITLLYFFAIYPILLVYSVAITNTVESFMSHQLGMTPPPRAILSLILIVGMMTIVRFGEQMIVKAMSILVFPFVGVLMLLALYLIPQWNGAALETLSLDTASATGNGLWMTLWLAIPVMVFSFNHSPIISSFAVAKREEYGDMAEQKCSKILAFAHIMMVLTVMFFVFSCVLSLTPADLAAAKEQNISILSYLANHFNAPVIAWMAPIIAIIAITKSFLGHYLGAREGFNGMVIKSLRGKGKSIEINKLNRITALFMLVTTWIVATLNPSILGMIETLGGPIIAMILFLMPMYAIQKVPAMRKYSGHISNVFVVVMGLIAISAIFYSLFS</sequence>
<proteinExistence type="evidence at protein level"/>
<gene>
    <name evidence="12" type="primary">sdaC</name>
    <name evidence="13" type="synonym">dcrA</name>
    <name type="ordered locus">b2796</name>
    <name type="ordered locus">JW2767</name>
</gene>
<reference key="1">
    <citation type="journal article" date="1994" name="Eur. J. Biochem.">
        <title>Sequencing and characterization of the sdaC gene and identification of the sdaCB operon in Escherichia coli K12.</title>
        <authorList>
            <person name="Shao Z."/>
            <person name="Lin R.T."/>
            <person name="Newman E.B."/>
        </authorList>
    </citation>
    <scope>NUCLEOTIDE SEQUENCE [GENOMIC DNA]</scope>
    <scope>FUNCTION</scope>
    <source>
        <strain>K12</strain>
    </source>
</reference>
<reference key="2">
    <citation type="journal article" date="1997" name="Science">
        <title>The complete genome sequence of Escherichia coli K-12.</title>
        <authorList>
            <person name="Blattner F.R."/>
            <person name="Plunkett G. III"/>
            <person name="Bloch C.A."/>
            <person name="Perna N.T."/>
            <person name="Burland V."/>
            <person name="Riley M."/>
            <person name="Collado-Vides J."/>
            <person name="Glasner J.D."/>
            <person name="Rode C.K."/>
            <person name="Mayhew G.F."/>
            <person name="Gregor J."/>
            <person name="Davis N.W."/>
            <person name="Kirkpatrick H.A."/>
            <person name="Goeden M.A."/>
            <person name="Rose D.J."/>
            <person name="Mau B."/>
            <person name="Shao Y."/>
        </authorList>
    </citation>
    <scope>NUCLEOTIDE SEQUENCE [LARGE SCALE GENOMIC DNA]</scope>
    <source>
        <strain>K12 / MG1655 / ATCC 47076</strain>
    </source>
</reference>
<reference key="3">
    <citation type="journal article" date="2006" name="Mol. Syst. Biol.">
        <title>Highly accurate genome sequences of Escherichia coli K-12 strains MG1655 and W3110.</title>
        <authorList>
            <person name="Hayashi K."/>
            <person name="Morooka N."/>
            <person name="Yamamoto Y."/>
            <person name="Fujita K."/>
            <person name="Isono K."/>
            <person name="Choi S."/>
            <person name="Ohtsubo E."/>
            <person name="Baba T."/>
            <person name="Wanner B.L."/>
            <person name="Mori H."/>
            <person name="Horiuchi T."/>
        </authorList>
    </citation>
    <scope>NUCLEOTIDE SEQUENCE [LARGE SCALE GENOMIC DNA]</scope>
    <source>
        <strain>K12 / W3110 / ATCC 27325 / DSM 5911</strain>
    </source>
</reference>
<reference key="4">
    <citation type="journal article" date="1988" name="J. Bacteriol.">
        <title>Characterization of a novel L-serine transport system in Escherichia coli.</title>
        <authorList>
            <person name="Hama H."/>
            <person name="Shimamoto T."/>
            <person name="Tsuda M."/>
            <person name="Tsuchiya T."/>
        </authorList>
    </citation>
    <scope>FUNCTION</scope>
    <scope>CATALYTIC ACTIVITY</scope>
    <scope>ACTIVITY REGULATION</scope>
    <scope>BIOPHYSICOCHEMICAL PROPERTIES</scope>
    <scope>INDUCTION</scope>
    <source>
        <strain>K12</strain>
    </source>
</reference>
<reference key="5">
    <citation type="journal article" date="1996" name="J. Bacteriol.">
        <title>Genetic control of the resistance to phage C1 of Escherichia coli K-12.</title>
        <authorList>
            <person name="Likhacheva N.A."/>
            <person name="Samsonov V.V."/>
            <person name="Samsonov V.V."/>
            <person name="Sineoky S.P."/>
        </authorList>
    </citation>
    <scope>FUNCTION</scope>
    <scope>FUNCTION IN PHAGE C1 INFECTION (MICROBIAL INFECTION)</scope>
    <scope>DISRUPTION PHENOTYPE</scope>
</reference>
<reference key="6">
    <citation type="journal article" date="2002" name="Res. Microbiol.">
        <title>DcrA and dcrB Escherichia coli genes can control DNA injection by phages specific for BtuB and FhuA receptors.</title>
        <authorList>
            <person name="Samsonov V.V."/>
            <person name="Samsonov V.V."/>
            <person name="Sineoky S.P."/>
        </authorList>
    </citation>
    <scope>FUNCTION IN PHAGE INFECTION (MICROBIAL INFECTION)</scope>
    <scope>DISRUPTION PHENOTYPE</scope>
</reference>
<reference key="7">
    <citation type="journal article" date="2005" name="J. Bacteriol.">
        <title>Bactericidal activity of colicin V is mediated by an inner membrane protein, SdaC, of Escherichia coli.</title>
        <authorList>
            <person name="Gerard F."/>
            <person name="Pradel N."/>
            <person name="Wu L.F."/>
        </authorList>
    </citation>
    <scope>FUNCTION AS A COLV RECEPTOR (MICROBIAL INFECTION)</scope>
    <scope>DISRUPTION PHENOTYPE</scope>
</reference>
<reference key="8">
    <citation type="journal article" date="2005" name="Science">
        <title>Global topology analysis of the Escherichia coli inner membrane proteome.</title>
        <authorList>
            <person name="Daley D.O."/>
            <person name="Rapp M."/>
            <person name="Granseth E."/>
            <person name="Melen K."/>
            <person name="Drew D."/>
            <person name="von Heijne G."/>
        </authorList>
    </citation>
    <scope>TOPOLOGY [LARGE SCALE ANALYSIS]</scope>
    <scope>SUBCELLULAR LOCATION</scope>
    <source>
        <strain>K12 / MG1655 / ATCC 47076</strain>
    </source>
</reference>
<reference key="9">
    <citation type="journal article" date="2009" name="J. Bacteriol.">
        <title>Involvement of the leucine response transcription factor LeuO in regulation of the genes for sulfa drug efflux.</title>
        <authorList>
            <person name="Shimada T."/>
            <person name="Yamamoto K."/>
            <person name="Ishihama A."/>
        </authorList>
    </citation>
    <scope>OPERON STRUCTURE</scope>
    <scope>INDUCTION</scope>
    <source>
        <strain>K12 / BW25113</strain>
    </source>
</reference>
<reference key="10">
    <citation type="journal article" date="2020" name="MicrobiologyOpen">
        <title>The serine transporter SdaC prevents cell lysis upon glucose depletion in Escherichia coli.</title>
        <authorList>
            <person name="Kriner M.A."/>
            <person name="Subramaniam A.R."/>
        </authorList>
    </citation>
    <scope>FUNCTION</scope>
    <scope>DISRUPTION PHENOTYPE</scope>
    <source>
        <strain>K12 / BW25113</strain>
        <strain>K12 / MG1655 / ATCC 47076</strain>
    </source>
</reference>
<feature type="chain" id="PRO_0000093808" description="Serine transporter SdaC">
    <location>
        <begin position="1"/>
        <end position="429"/>
    </location>
</feature>
<feature type="topological domain" description="Cytoplasmic" evidence="14">
    <location>
        <begin position="1"/>
        <end position="22"/>
    </location>
</feature>
<feature type="transmembrane region" description="Helical" evidence="1">
    <location>
        <begin position="23"/>
        <end position="43"/>
    </location>
</feature>
<feature type="topological domain" description="Periplasmic" evidence="14">
    <location>
        <begin position="44"/>
        <end position="46"/>
    </location>
</feature>
<feature type="transmembrane region" description="Helical" evidence="1">
    <location>
        <begin position="47"/>
        <end position="67"/>
    </location>
</feature>
<feature type="topological domain" description="Cytoplasmic" evidence="14">
    <location>
        <begin position="68"/>
        <end position="99"/>
    </location>
</feature>
<feature type="transmembrane region" description="Helical" evidence="1">
    <location>
        <begin position="100"/>
        <end position="120"/>
    </location>
</feature>
<feature type="topological domain" description="Periplasmic" evidence="14">
    <location>
        <begin position="121"/>
        <end position="140"/>
    </location>
</feature>
<feature type="transmembrane region" description="Helical" evidence="1">
    <location>
        <begin position="141"/>
        <end position="161"/>
    </location>
</feature>
<feature type="topological domain" description="Cytoplasmic" evidence="14">
    <location>
        <begin position="162"/>
        <end position="163"/>
    </location>
</feature>
<feature type="transmembrane region" description="Helical" evidence="1">
    <location>
        <begin position="164"/>
        <end position="184"/>
    </location>
</feature>
<feature type="topological domain" description="Periplasmic" evidence="14">
    <location>
        <begin position="185"/>
        <end position="201"/>
    </location>
</feature>
<feature type="transmembrane region" description="Helical" evidence="1">
    <location>
        <begin position="202"/>
        <end position="222"/>
    </location>
</feature>
<feature type="topological domain" description="Cytoplasmic" evidence="14">
    <location>
        <begin position="223"/>
        <end position="249"/>
    </location>
</feature>
<feature type="transmembrane region" description="Helical" evidence="1">
    <location>
        <begin position="250"/>
        <end position="270"/>
    </location>
</feature>
<feature type="topological domain" description="Periplasmic" evidence="14">
    <location>
        <begin position="271"/>
        <end position="297"/>
    </location>
</feature>
<feature type="transmembrane region" description="Helical" evidence="1">
    <location>
        <begin position="298"/>
        <end position="318"/>
    </location>
</feature>
<feature type="topological domain" description="Cytoplasmic" evidence="14">
    <location>
        <begin position="319"/>
        <end position="347"/>
    </location>
</feature>
<feature type="transmembrane region" description="Helical" evidence="1">
    <location>
        <begin position="348"/>
        <end position="368"/>
    </location>
</feature>
<feature type="topological domain" description="Periplasmic" evidence="14">
    <location>
        <position position="369"/>
    </location>
</feature>
<feature type="transmembrane region" description="Helical" evidence="1">
    <location>
        <begin position="370"/>
        <end position="390"/>
    </location>
</feature>
<feature type="topological domain" description="Cytoplasmic" evidence="14">
    <location>
        <begin position="391"/>
        <end position="406"/>
    </location>
</feature>
<feature type="transmembrane region" description="Helical" evidence="1">
    <location>
        <begin position="407"/>
        <end position="427"/>
    </location>
</feature>
<feature type="topological domain" description="Periplasmic" evidence="4">
    <location>
        <begin position="428"/>
        <end position="429"/>
    </location>
</feature>
<comment type="function">
    <text evidence="6 7 8 15">Mediates the import of L-serine into the cell (PubMed:3129404, PubMed:8026499). Is energized by proton cotransport (PubMed:3129404). Promotes amino acid homeostasis during adaptation to glucose limitation (PubMed:31680488). May also be involved in ampicillin sensitivity (Probable).</text>
</comment>
<comment type="function">
    <text evidence="2 9">(Microbial infection) Involved in phage C1 and phage C6 infection (PubMed:12558182, PubMed:8752353). Participates in phage DNA transport pathways in cooperation with different outer membrane receptors, including FhuA and BtuB (PubMed:12558182). Is probably required in the second stage of phage adsorption, the DNA injection process. Participates in the formation or opening of diffusion channels through the outer membrane after phage adsorption (PubMed:12558182).</text>
</comment>
<comment type="function">
    <text evidence="3">(Microbial infection) May function as an inner membrane receptor of colicin V (ColV), a peptide antibiotic secreted by some members of the Enterobacteriaceae to kill closely related bacterial cells.</text>
</comment>
<comment type="catalytic activity">
    <reaction evidence="6">
        <text>L-serine(in) + H(+)(in) = L-serine(out) + H(+)(out)</text>
        <dbReference type="Rhea" id="RHEA:28887"/>
        <dbReference type="ChEBI" id="CHEBI:15378"/>
        <dbReference type="ChEBI" id="CHEBI:33384"/>
    </reaction>
    <physiologicalReaction direction="right-to-left" evidence="6">
        <dbReference type="Rhea" id="RHEA:28889"/>
    </physiologicalReaction>
</comment>
<comment type="activity regulation">
    <text evidence="6">Serine transport is strongly inhibited by KCN, an inhibitor of the respiratory chain, or by CCCP.</text>
</comment>
<comment type="biophysicochemical properties">
    <kinetics>
        <KM evidence="6">50 uM for L-serine</KM>
        <Vmax evidence="6">23.0 nmol/min/mg enzyme</Vmax>
    </kinetics>
</comment>
<comment type="subcellular location">
    <subcellularLocation>
        <location evidence="4">Cell inner membrane</location>
        <topology evidence="1">Multi-pass membrane protein</topology>
    </subcellularLocation>
</comment>
<comment type="induction">
    <text evidence="5 6">By leucine and by growth in rich medium (PubMed:19429622, PubMed:3129404). Repressed by LeuO. Part of the sdaCB operon (PubMed:19429622).</text>
</comment>
<comment type="disruption phenotype">
    <text evidence="2 3 7 9">Disruption of the gene leads to phage C1 adsorption defect. Mutation does not impair vitamin B12 utilization. Inactivation also leads to increased ampicillin resistance (PubMed:8752353). Mutant is resistant to phage C6 (PubMed:12558182). Mutation also confers resistance to ColV (PubMed:15743941). Deletion mutant lyses upon glucose depletion in the absence of exogenous serine (PubMed:31680488).</text>
</comment>
<comment type="similarity">
    <text evidence="14">Belongs to the amino acid/polyamine transporter 2 family. SdaC/TdcC subfamily.</text>
</comment>
<dbReference type="EMBL" id="U01233">
    <property type="protein sequence ID" value="AAA50169.1"/>
    <property type="molecule type" value="Genomic_DNA"/>
</dbReference>
<dbReference type="EMBL" id="U29581">
    <property type="protein sequence ID" value="AAB40446.1"/>
    <property type="molecule type" value="Genomic_DNA"/>
</dbReference>
<dbReference type="EMBL" id="U00096">
    <property type="protein sequence ID" value="AAC75838.1"/>
    <property type="molecule type" value="Genomic_DNA"/>
</dbReference>
<dbReference type="EMBL" id="AP009048">
    <property type="protein sequence ID" value="BAE76868.1"/>
    <property type="molecule type" value="Genomic_DNA"/>
</dbReference>
<dbReference type="PIR" id="S45633">
    <property type="entry name" value="S45633"/>
</dbReference>
<dbReference type="RefSeq" id="NP_417276.1">
    <property type="nucleotide sequence ID" value="NC_000913.3"/>
</dbReference>
<dbReference type="RefSeq" id="WP_000450476.1">
    <property type="nucleotide sequence ID" value="NZ_STEB01000030.1"/>
</dbReference>
<dbReference type="BioGRID" id="4261307">
    <property type="interactions" value="23"/>
</dbReference>
<dbReference type="BioGRID" id="851594">
    <property type="interactions" value="1"/>
</dbReference>
<dbReference type="FunCoup" id="P0AAD6">
    <property type="interactions" value="14"/>
</dbReference>
<dbReference type="STRING" id="511145.b2796"/>
<dbReference type="TCDB" id="2.A.42.2.1">
    <property type="family name" value="the hydroxy/aromatic amino acid permease (haaap) family"/>
</dbReference>
<dbReference type="jPOST" id="P0AAD6"/>
<dbReference type="PaxDb" id="511145-b2796"/>
<dbReference type="EnsemblBacteria" id="AAC75838">
    <property type="protein sequence ID" value="AAC75838"/>
    <property type="gene ID" value="b2796"/>
</dbReference>
<dbReference type="GeneID" id="93779202"/>
<dbReference type="GeneID" id="947264"/>
<dbReference type="KEGG" id="ecj:JW2767"/>
<dbReference type="KEGG" id="eco:b2796"/>
<dbReference type="KEGG" id="ecoc:C3026_15375"/>
<dbReference type="PATRIC" id="fig|1411691.4.peg.3937"/>
<dbReference type="EchoBASE" id="EB2063"/>
<dbReference type="eggNOG" id="COG0814">
    <property type="taxonomic scope" value="Bacteria"/>
</dbReference>
<dbReference type="HOGENOM" id="CLU_052043_1_1_6"/>
<dbReference type="InParanoid" id="P0AAD6"/>
<dbReference type="OMA" id="VMCLNAD"/>
<dbReference type="OrthoDB" id="1627372at2"/>
<dbReference type="PhylomeDB" id="P0AAD6"/>
<dbReference type="BioCyc" id="EcoCyc:SDAC-MONOMER"/>
<dbReference type="BioCyc" id="MetaCyc:SDAC-MONOMER"/>
<dbReference type="PRO" id="PR:P0AAD6"/>
<dbReference type="Proteomes" id="UP000000625">
    <property type="component" value="Chromosome"/>
</dbReference>
<dbReference type="GO" id="GO:0005886">
    <property type="term" value="C:plasma membrane"/>
    <property type="evidence" value="ECO:0000255"/>
    <property type="project" value="EcoCyc"/>
</dbReference>
<dbReference type="GO" id="GO:0015194">
    <property type="term" value="F:L-serine transmembrane transporter activity"/>
    <property type="evidence" value="ECO:0000315"/>
    <property type="project" value="EcoCyc"/>
</dbReference>
<dbReference type="GO" id="GO:0015293">
    <property type="term" value="F:symporter activity"/>
    <property type="evidence" value="ECO:0007669"/>
    <property type="project" value="UniProtKB-KW"/>
</dbReference>
<dbReference type="GO" id="GO:0022857">
    <property type="term" value="F:transmembrane transporter activity"/>
    <property type="evidence" value="ECO:0000318"/>
    <property type="project" value="GO_Central"/>
</dbReference>
<dbReference type="GO" id="GO:0006865">
    <property type="term" value="P:amino acid transport"/>
    <property type="evidence" value="ECO:0000318"/>
    <property type="project" value="GO_Central"/>
</dbReference>
<dbReference type="GO" id="GO:0015825">
    <property type="term" value="P:L-serine transport"/>
    <property type="evidence" value="ECO:0000315"/>
    <property type="project" value="EcoCyc"/>
</dbReference>
<dbReference type="InterPro" id="IPR018227">
    <property type="entry name" value="Amino_acid_transport_2"/>
</dbReference>
<dbReference type="InterPro" id="IPR004694">
    <property type="entry name" value="Hydroxy_aa_transpt"/>
</dbReference>
<dbReference type="NCBIfam" id="TIGR00814">
    <property type="entry name" value="stp"/>
    <property type="match status" value="1"/>
</dbReference>
<dbReference type="PANTHER" id="PTHR35334">
    <property type="entry name" value="SERINE TRANSPORTER"/>
    <property type="match status" value="1"/>
</dbReference>
<dbReference type="PANTHER" id="PTHR35334:SF2">
    <property type="entry name" value="SERINE TRANSPORTER SDAC"/>
    <property type="match status" value="1"/>
</dbReference>
<evidence type="ECO:0000255" key="1"/>
<evidence type="ECO:0000269" key="2">
    <source>
    </source>
</evidence>
<evidence type="ECO:0000269" key="3">
    <source>
    </source>
</evidence>
<evidence type="ECO:0000269" key="4">
    <source>
    </source>
</evidence>
<evidence type="ECO:0000269" key="5">
    <source>
    </source>
</evidence>
<evidence type="ECO:0000269" key="6">
    <source>
    </source>
</evidence>
<evidence type="ECO:0000269" key="7">
    <source>
    </source>
</evidence>
<evidence type="ECO:0000269" key="8">
    <source>
    </source>
</evidence>
<evidence type="ECO:0000269" key="9">
    <source>
    </source>
</evidence>
<evidence type="ECO:0000303" key="10">
    <source>
    </source>
</evidence>
<evidence type="ECO:0000303" key="11">
    <source>
    </source>
</evidence>
<evidence type="ECO:0000303" key="12">
    <source>
    </source>
</evidence>
<evidence type="ECO:0000303" key="13">
    <source>
    </source>
</evidence>
<evidence type="ECO:0000305" key="14"/>
<evidence type="ECO:0000305" key="15">
    <source>
    </source>
</evidence>
<keyword id="KW-0029">Amino-acid transport</keyword>
<keyword id="KW-0997">Cell inner membrane</keyword>
<keyword id="KW-1003">Cell membrane</keyword>
<keyword id="KW-0472">Membrane</keyword>
<keyword id="KW-1185">Reference proteome</keyword>
<keyword id="KW-0769">Symport</keyword>
<keyword id="KW-0812">Transmembrane</keyword>
<keyword id="KW-1133">Transmembrane helix</keyword>
<keyword id="KW-0813">Transport</keyword>